<dbReference type="EC" id="2.7.1.23" evidence="1"/>
<dbReference type="EMBL" id="BA000004">
    <property type="protein sequence ID" value="BAB06918.1"/>
    <property type="molecule type" value="Genomic_DNA"/>
</dbReference>
<dbReference type="PIR" id="G84049">
    <property type="entry name" value="G84049"/>
</dbReference>
<dbReference type="RefSeq" id="WP_010899342.1">
    <property type="nucleotide sequence ID" value="NC_002570.2"/>
</dbReference>
<dbReference type="SMR" id="Q9K808"/>
<dbReference type="STRING" id="272558.gene:10729111"/>
<dbReference type="GeneID" id="87598718"/>
<dbReference type="KEGG" id="bha:BH3199"/>
<dbReference type="eggNOG" id="COG0061">
    <property type="taxonomic scope" value="Bacteria"/>
</dbReference>
<dbReference type="HOGENOM" id="CLU_008831_0_3_9"/>
<dbReference type="OrthoDB" id="9774737at2"/>
<dbReference type="Proteomes" id="UP000001258">
    <property type="component" value="Chromosome"/>
</dbReference>
<dbReference type="GO" id="GO:0005737">
    <property type="term" value="C:cytoplasm"/>
    <property type="evidence" value="ECO:0007669"/>
    <property type="project" value="UniProtKB-SubCell"/>
</dbReference>
<dbReference type="GO" id="GO:0005524">
    <property type="term" value="F:ATP binding"/>
    <property type="evidence" value="ECO:0007669"/>
    <property type="project" value="UniProtKB-KW"/>
</dbReference>
<dbReference type="GO" id="GO:0046872">
    <property type="term" value="F:metal ion binding"/>
    <property type="evidence" value="ECO:0007669"/>
    <property type="project" value="UniProtKB-UniRule"/>
</dbReference>
<dbReference type="GO" id="GO:0051287">
    <property type="term" value="F:NAD binding"/>
    <property type="evidence" value="ECO:0007669"/>
    <property type="project" value="UniProtKB-ARBA"/>
</dbReference>
<dbReference type="GO" id="GO:0003951">
    <property type="term" value="F:NAD+ kinase activity"/>
    <property type="evidence" value="ECO:0007669"/>
    <property type="project" value="UniProtKB-UniRule"/>
</dbReference>
<dbReference type="GO" id="GO:0019674">
    <property type="term" value="P:NAD metabolic process"/>
    <property type="evidence" value="ECO:0007669"/>
    <property type="project" value="InterPro"/>
</dbReference>
<dbReference type="GO" id="GO:0006741">
    <property type="term" value="P:NADP biosynthetic process"/>
    <property type="evidence" value="ECO:0007669"/>
    <property type="project" value="UniProtKB-UniRule"/>
</dbReference>
<dbReference type="Gene3D" id="3.40.50.10330">
    <property type="entry name" value="Probable inorganic polyphosphate/atp-NAD kinase, domain 1"/>
    <property type="match status" value="1"/>
</dbReference>
<dbReference type="Gene3D" id="2.60.200.30">
    <property type="entry name" value="Probable inorganic polyphosphate/atp-NAD kinase, domain 2"/>
    <property type="match status" value="1"/>
</dbReference>
<dbReference type="HAMAP" id="MF_00361">
    <property type="entry name" value="NAD_kinase"/>
    <property type="match status" value="1"/>
</dbReference>
<dbReference type="InterPro" id="IPR017438">
    <property type="entry name" value="ATP-NAD_kinase_N"/>
</dbReference>
<dbReference type="InterPro" id="IPR017437">
    <property type="entry name" value="ATP-NAD_kinase_PpnK-typ_C"/>
</dbReference>
<dbReference type="InterPro" id="IPR016064">
    <property type="entry name" value="NAD/diacylglycerol_kinase_sf"/>
</dbReference>
<dbReference type="InterPro" id="IPR002504">
    <property type="entry name" value="NADK"/>
</dbReference>
<dbReference type="NCBIfam" id="NF002902">
    <property type="entry name" value="PRK03501.1"/>
    <property type="match status" value="1"/>
</dbReference>
<dbReference type="PANTHER" id="PTHR20275">
    <property type="entry name" value="NAD KINASE"/>
    <property type="match status" value="1"/>
</dbReference>
<dbReference type="PANTHER" id="PTHR20275:SF9">
    <property type="entry name" value="NAD KINASE 2"/>
    <property type="match status" value="1"/>
</dbReference>
<dbReference type="Pfam" id="PF20143">
    <property type="entry name" value="NAD_kinase_C"/>
    <property type="match status" value="1"/>
</dbReference>
<dbReference type="SUPFAM" id="SSF111331">
    <property type="entry name" value="NAD kinase/diacylglycerol kinase-like"/>
    <property type="match status" value="1"/>
</dbReference>
<keyword id="KW-0067">ATP-binding</keyword>
<keyword id="KW-0963">Cytoplasm</keyword>
<keyword id="KW-0418">Kinase</keyword>
<keyword id="KW-0520">NAD</keyword>
<keyword id="KW-0521">NADP</keyword>
<keyword id="KW-0547">Nucleotide-binding</keyword>
<keyword id="KW-1185">Reference proteome</keyword>
<keyword id="KW-0808">Transferase</keyword>
<gene>
    <name evidence="1" type="primary">nadK2</name>
    <name type="ordered locus">BH3199</name>
</gene>
<sequence length="265" mass="30170">MEDRNNIYFFYKHTKSMQEAVEPLKQLATSQGLNVVDDVQKANIIVSVGGNNAFLQATRKTNFRSDCLYVGVSTDREGFYPDFTINEIDKMFEAFENQNIEVKRLSTLEVTIDDEKPFYCLNECSIRSNVIKTFVLEVFIDDMHFETFRGDGMIVSTPTGSTAYNKSVRGAVVDPRLPSLQVSEIASLNNNTYRTLGTSFLLSGDRTLRLKVVQDGNDFPIIGADNEALSIRHAEDIKIRLSDKQVKVLKLKDNTFWHKVQRNFL</sequence>
<reference key="1">
    <citation type="journal article" date="2000" name="Nucleic Acids Res.">
        <title>Complete genome sequence of the alkaliphilic bacterium Bacillus halodurans and genomic sequence comparison with Bacillus subtilis.</title>
        <authorList>
            <person name="Takami H."/>
            <person name="Nakasone K."/>
            <person name="Takaki Y."/>
            <person name="Maeno G."/>
            <person name="Sasaki R."/>
            <person name="Masui N."/>
            <person name="Fuji F."/>
            <person name="Hirama C."/>
            <person name="Nakamura Y."/>
            <person name="Ogasawara N."/>
            <person name="Kuhara S."/>
            <person name="Horikoshi K."/>
        </authorList>
    </citation>
    <scope>NUCLEOTIDE SEQUENCE [LARGE SCALE GENOMIC DNA]</scope>
    <source>
        <strain>ATCC BAA-125 / DSM 18197 / FERM 7344 / JCM 9153 / C-125</strain>
    </source>
</reference>
<comment type="function">
    <text evidence="1">Involved in the regulation of the intracellular balance of NAD and NADP, and is a key enzyme in the biosynthesis of NADP. Catalyzes specifically the phosphorylation on 2'-hydroxyl of the adenosine moiety of NAD to yield NADP.</text>
</comment>
<comment type="catalytic activity">
    <reaction evidence="1">
        <text>NAD(+) + ATP = ADP + NADP(+) + H(+)</text>
        <dbReference type="Rhea" id="RHEA:18629"/>
        <dbReference type="ChEBI" id="CHEBI:15378"/>
        <dbReference type="ChEBI" id="CHEBI:30616"/>
        <dbReference type="ChEBI" id="CHEBI:57540"/>
        <dbReference type="ChEBI" id="CHEBI:58349"/>
        <dbReference type="ChEBI" id="CHEBI:456216"/>
        <dbReference type="EC" id="2.7.1.23"/>
    </reaction>
</comment>
<comment type="cofactor">
    <cofactor evidence="1">
        <name>a divalent metal cation</name>
        <dbReference type="ChEBI" id="CHEBI:60240"/>
    </cofactor>
</comment>
<comment type="subcellular location">
    <subcellularLocation>
        <location evidence="1">Cytoplasm</location>
    </subcellularLocation>
</comment>
<comment type="similarity">
    <text evidence="1">Belongs to the NAD kinase family.</text>
</comment>
<organism>
    <name type="scientific">Halalkalibacterium halodurans (strain ATCC BAA-125 / DSM 18197 / FERM 7344 / JCM 9153 / C-125)</name>
    <name type="common">Bacillus halodurans</name>
    <dbReference type="NCBI Taxonomy" id="272558"/>
    <lineage>
        <taxon>Bacteria</taxon>
        <taxon>Bacillati</taxon>
        <taxon>Bacillota</taxon>
        <taxon>Bacilli</taxon>
        <taxon>Bacillales</taxon>
        <taxon>Bacillaceae</taxon>
        <taxon>Halalkalibacterium (ex Joshi et al. 2022)</taxon>
    </lineage>
</organism>
<feature type="chain" id="PRO_0000120596" description="NAD kinase 2">
    <location>
        <begin position="1"/>
        <end position="265"/>
    </location>
</feature>
<feature type="active site" description="Proton acceptor" evidence="1">
    <location>
        <position position="51"/>
    </location>
</feature>
<feature type="binding site" evidence="1">
    <location>
        <begin position="122"/>
        <end position="123"/>
    </location>
    <ligand>
        <name>NAD(+)</name>
        <dbReference type="ChEBI" id="CHEBI:57540"/>
    </ligand>
</feature>
<feature type="binding site" evidence="1">
    <location>
        <position position="149"/>
    </location>
    <ligand>
        <name>NAD(+)</name>
        <dbReference type="ChEBI" id="CHEBI:57540"/>
    </ligand>
</feature>
<feature type="binding site" evidence="1">
    <location>
        <position position="151"/>
    </location>
    <ligand>
        <name>NAD(+)</name>
        <dbReference type="ChEBI" id="CHEBI:57540"/>
    </ligand>
</feature>
<feature type="binding site" evidence="1">
    <location>
        <begin position="162"/>
        <end position="167"/>
    </location>
    <ligand>
        <name>NAD(+)</name>
        <dbReference type="ChEBI" id="CHEBI:57540"/>
    </ligand>
</feature>
<feature type="binding site" evidence="1">
    <location>
        <position position="186"/>
    </location>
    <ligand>
        <name>NAD(+)</name>
        <dbReference type="ChEBI" id="CHEBI:57540"/>
    </ligand>
</feature>
<feature type="binding site" evidence="1">
    <location>
        <position position="226"/>
    </location>
    <ligand>
        <name>NAD(+)</name>
        <dbReference type="ChEBI" id="CHEBI:57540"/>
    </ligand>
</feature>
<evidence type="ECO:0000255" key="1">
    <source>
        <dbReference type="HAMAP-Rule" id="MF_00361"/>
    </source>
</evidence>
<proteinExistence type="inferred from homology"/>
<accession>Q9K808</accession>
<name>NADK2_HALH5</name>
<protein>
    <recommendedName>
        <fullName evidence="1">NAD kinase 2</fullName>
        <ecNumber evidence="1">2.7.1.23</ecNumber>
    </recommendedName>
    <alternativeName>
        <fullName evidence="1">ATP-dependent NAD kinase 2</fullName>
    </alternativeName>
</protein>